<name>HRCA_NODSP</name>
<keyword id="KW-0678">Repressor</keyword>
<keyword id="KW-0346">Stress response</keyword>
<keyword id="KW-0804">Transcription</keyword>
<keyword id="KW-0805">Transcription regulation</keyword>
<reference key="1">
    <citation type="journal article" date="2003" name="J. Mol. Evol.">
        <title>Evolutionary affiliations within the superfamily of ketosynthases reflect complex pathway associations.</title>
        <authorList>
            <person name="Moffitt M.C."/>
            <person name="Neilan B.A."/>
        </authorList>
    </citation>
    <scope>NUCLEOTIDE SEQUENCE [GENOMIC DNA]</scope>
    <source>
        <strain>NSOR10</strain>
    </source>
</reference>
<sequence length="365" mass="40732">MEVQLTNRQQHILWATVRHYIATAEPVGSKALVDEYDLGVSSATIRNVMGVLEKSGLLYQPHTSAGRIPSDSGYRIYVDQLITPGLRDAARTDVLAKEVELALQNRLHWEDWSLEAVLQGAAQILATVSGCISLITMPQTTTAILRHLQLMQIEANKIMLIVVTDDYETHSKLMNLSPTEEEAKLDADGIDHELKIVSNFLNTHLRGRSLLELATLDWSDLDQEFQRYGEFLKGSVTELTRRHLTPTTTQIMVRGVAEVLRQPEFSQLQQVQTIIQLLEEEQDQLWRLIFAEPETEEAGKSKVTVRIGTENPLEPIRTCTLITSTYRRGLLPVGSVGVLGPTRLDYDSAIAVVAAAADYLSDAFS</sequence>
<proteinExistence type="inferred from homology"/>
<dbReference type="EMBL" id="AY210783">
    <property type="protein sequence ID" value="AAO39777.2"/>
    <property type="molecule type" value="Genomic_DNA"/>
</dbReference>
<dbReference type="RefSeq" id="WP_006198784.1">
    <property type="nucleotide sequence ID" value="NZ_CAWRPH010000001.1"/>
</dbReference>
<dbReference type="SMR" id="Q84B70"/>
<dbReference type="GeneID" id="78019712"/>
<dbReference type="GO" id="GO:0003677">
    <property type="term" value="F:DNA binding"/>
    <property type="evidence" value="ECO:0007669"/>
    <property type="project" value="InterPro"/>
</dbReference>
<dbReference type="GO" id="GO:0045892">
    <property type="term" value="P:negative regulation of DNA-templated transcription"/>
    <property type="evidence" value="ECO:0007669"/>
    <property type="project" value="UniProtKB-UniRule"/>
</dbReference>
<dbReference type="Gene3D" id="3.30.450.40">
    <property type="match status" value="1"/>
</dbReference>
<dbReference type="Gene3D" id="3.30.390.60">
    <property type="entry name" value="Heat-inducible transcription repressor hrca homolog, domain 3"/>
    <property type="match status" value="1"/>
</dbReference>
<dbReference type="Gene3D" id="1.10.10.10">
    <property type="entry name" value="Winged helix-like DNA-binding domain superfamily/Winged helix DNA-binding domain"/>
    <property type="match status" value="1"/>
</dbReference>
<dbReference type="HAMAP" id="MF_00081">
    <property type="entry name" value="HrcA"/>
    <property type="match status" value="1"/>
</dbReference>
<dbReference type="InterPro" id="IPR029016">
    <property type="entry name" value="GAF-like_dom_sf"/>
</dbReference>
<dbReference type="InterPro" id="IPR002571">
    <property type="entry name" value="HrcA"/>
</dbReference>
<dbReference type="InterPro" id="IPR021153">
    <property type="entry name" value="HrcA_C"/>
</dbReference>
<dbReference type="InterPro" id="IPR036388">
    <property type="entry name" value="WH-like_DNA-bd_sf"/>
</dbReference>
<dbReference type="InterPro" id="IPR036390">
    <property type="entry name" value="WH_DNA-bd_sf"/>
</dbReference>
<dbReference type="InterPro" id="IPR023120">
    <property type="entry name" value="WHTH_transcript_rep_HrcA_IDD"/>
</dbReference>
<dbReference type="NCBIfam" id="TIGR00331">
    <property type="entry name" value="hrcA"/>
    <property type="match status" value="1"/>
</dbReference>
<dbReference type="PANTHER" id="PTHR34824">
    <property type="entry name" value="HEAT-INDUCIBLE TRANSCRIPTION REPRESSOR HRCA"/>
    <property type="match status" value="1"/>
</dbReference>
<dbReference type="PANTHER" id="PTHR34824:SF1">
    <property type="entry name" value="HEAT-INDUCIBLE TRANSCRIPTION REPRESSOR HRCA"/>
    <property type="match status" value="1"/>
</dbReference>
<dbReference type="Pfam" id="PF01628">
    <property type="entry name" value="HrcA"/>
    <property type="match status" value="1"/>
</dbReference>
<dbReference type="PIRSF" id="PIRSF005485">
    <property type="entry name" value="HrcA"/>
    <property type="match status" value="1"/>
</dbReference>
<dbReference type="SUPFAM" id="SSF55781">
    <property type="entry name" value="GAF domain-like"/>
    <property type="match status" value="1"/>
</dbReference>
<dbReference type="SUPFAM" id="SSF46785">
    <property type="entry name" value="Winged helix' DNA-binding domain"/>
    <property type="match status" value="1"/>
</dbReference>
<comment type="function">
    <text evidence="1">Negative regulator of class I heat shock genes (grpE-dnaK-dnaJ and groELS operons). Prevents heat-shock induction of these operons.</text>
</comment>
<comment type="similarity">
    <text evidence="1">Belongs to the HrcA family.</text>
</comment>
<gene>
    <name evidence="1" type="primary">hrcA</name>
</gene>
<accession>Q84B70</accession>
<protein>
    <recommendedName>
        <fullName evidence="1">Heat-inducible transcription repressor HrcA</fullName>
    </recommendedName>
</protein>
<evidence type="ECO:0000255" key="1">
    <source>
        <dbReference type="HAMAP-Rule" id="MF_00081"/>
    </source>
</evidence>
<organism>
    <name type="scientific">Nodularia spumigena</name>
    <dbReference type="NCBI Taxonomy" id="70799"/>
    <lineage>
        <taxon>Bacteria</taxon>
        <taxon>Bacillati</taxon>
        <taxon>Cyanobacteriota</taxon>
        <taxon>Cyanophyceae</taxon>
        <taxon>Nostocales</taxon>
        <taxon>Nodulariaceae</taxon>
        <taxon>Nodularia</taxon>
    </lineage>
</organism>
<feature type="chain" id="PRO_0000182515" description="Heat-inducible transcription repressor HrcA">
    <location>
        <begin position="1"/>
        <end position="365"/>
    </location>
</feature>